<feature type="chain" id="PRO_0000205430" description="Guanylate binding protein 128up">
    <location>
        <begin position="1"/>
        <end position="368"/>
    </location>
</feature>
<feature type="domain" description="OBG-type G" evidence="3">
    <location>
        <begin position="65"/>
        <end position="290"/>
    </location>
</feature>
<feature type="domain" description="TGS" evidence="4">
    <location>
        <begin position="290"/>
        <end position="366"/>
    </location>
</feature>
<feature type="binding site" evidence="3">
    <location>
        <begin position="71"/>
        <end position="78"/>
    </location>
    <ligand>
        <name>GTP</name>
        <dbReference type="ChEBI" id="CHEBI:37565"/>
    </ligand>
</feature>
<feature type="binding site" evidence="3">
    <location>
        <begin position="117"/>
        <end position="121"/>
    </location>
    <ligand>
        <name>GTP</name>
        <dbReference type="ChEBI" id="CHEBI:37565"/>
    </ligand>
</feature>
<feature type="binding site" evidence="3">
    <location>
        <begin position="248"/>
        <end position="251"/>
    </location>
    <ligand>
        <name>GTP</name>
        <dbReference type="ChEBI" id="CHEBI:37565"/>
    </ligand>
</feature>
<feature type="modified residue" description="(3S)-3-hydroxylysine" evidence="5">
    <location>
        <position position="22"/>
    </location>
</feature>
<feature type="sequence conflict" description="In Ref. 1; CAA50701." evidence="8" ref="1">
    <original>S</original>
    <variation>I</variation>
    <location>
        <position position="2"/>
    </location>
</feature>
<feature type="sequence conflict" description="In Ref. 1; CAA50701." evidence="8" ref="1">
    <original>KL</original>
    <variation>NV</variation>
    <location>
        <begin position="34"/>
        <end position="35"/>
    </location>
</feature>
<organism evidence="10">
    <name type="scientific">Drosophila melanogaster</name>
    <name type="common">Fruit fly</name>
    <dbReference type="NCBI Taxonomy" id="7227"/>
    <lineage>
        <taxon>Eukaryota</taxon>
        <taxon>Metazoa</taxon>
        <taxon>Ecdysozoa</taxon>
        <taxon>Arthropoda</taxon>
        <taxon>Hexapoda</taxon>
        <taxon>Insecta</taxon>
        <taxon>Pterygota</taxon>
        <taxon>Neoptera</taxon>
        <taxon>Endopterygota</taxon>
        <taxon>Diptera</taxon>
        <taxon>Brachycera</taxon>
        <taxon>Muscomorpha</taxon>
        <taxon>Ephydroidea</taxon>
        <taxon>Drosophilidae</taxon>
        <taxon>Drosophila</taxon>
        <taxon>Sophophora</taxon>
    </lineage>
</organism>
<name>128UP_DROME</name>
<reference key="1">
    <citation type="journal article" date="1994" name="Mol. Gen. Genet.">
        <title>The gene upstream of DmRP128 codes for a novel GTP-binding protein of Drosophila melanogaster.</title>
        <authorList>
            <person name="Sommer K.A."/>
            <person name="Petersen G."/>
            <person name="Bautz E.K.F."/>
        </authorList>
    </citation>
    <scope>NUCLEOTIDE SEQUENCE [GENOMIC DNA]</scope>
    <source>
        <strain>Oregon-R</strain>
    </source>
</reference>
<reference key="2">
    <citation type="journal article" date="2000" name="Science">
        <title>The genome sequence of Drosophila melanogaster.</title>
        <authorList>
            <person name="Adams M.D."/>
            <person name="Celniker S.E."/>
            <person name="Holt R.A."/>
            <person name="Evans C.A."/>
            <person name="Gocayne J.D."/>
            <person name="Amanatides P.G."/>
            <person name="Scherer S.E."/>
            <person name="Li P.W."/>
            <person name="Hoskins R.A."/>
            <person name="Galle R.F."/>
            <person name="George R.A."/>
            <person name="Lewis S.E."/>
            <person name="Richards S."/>
            <person name="Ashburner M."/>
            <person name="Henderson S.N."/>
            <person name="Sutton G.G."/>
            <person name="Wortman J.R."/>
            <person name="Yandell M.D."/>
            <person name="Zhang Q."/>
            <person name="Chen L.X."/>
            <person name="Brandon R.C."/>
            <person name="Rogers Y.-H.C."/>
            <person name="Blazej R.G."/>
            <person name="Champe M."/>
            <person name="Pfeiffer B.D."/>
            <person name="Wan K.H."/>
            <person name="Doyle C."/>
            <person name="Baxter E.G."/>
            <person name="Helt G."/>
            <person name="Nelson C.R."/>
            <person name="Miklos G.L.G."/>
            <person name="Abril J.F."/>
            <person name="Agbayani A."/>
            <person name="An H.-J."/>
            <person name="Andrews-Pfannkoch C."/>
            <person name="Baldwin D."/>
            <person name="Ballew R.M."/>
            <person name="Basu A."/>
            <person name="Baxendale J."/>
            <person name="Bayraktaroglu L."/>
            <person name="Beasley E.M."/>
            <person name="Beeson K.Y."/>
            <person name="Benos P.V."/>
            <person name="Berman B.P."/>
            <person name="Bhandari D."/>
            <person name="Bolshakov S."/>
            <person name="Borkova D."/>
            <person name="Botchan M.R."/>
            <person name="Bouck J."/>
            <person name="Brokstein P."/>
            <person name="Brottier P."/>
            <person name="Burtis K.C."/>
            <person name="Busam D.A."/>
            <person name="Butler H."/>
            <person name="Cadieu E."/>
            <person name="Center A."/>
            <person name="Chandra I."/>
            <person name="Cherry J.M."/>
            <person name="Cawley S."/>
            <person name="Dahlke C."/>
            <person name="Davenport L.B."/>
            <person name="Davies P."/>
            <person name="de Pablos B."/>
            <person name="Delcher A."/>
            <person name="Deng Z."/>
            <person name="Mays A.D."/>
            <person name="Dew I."/>
            <person name="Dietz S.M."/>
            <person name="Dodson K."/>
            <person name="Doup L.E."/>
            <person name="Downes M."/>
            <person name="Dugan-Rocha S."/>
            <person name="Dunkov B.C."/>
            <person name="Dunn P."/>
            <person name="Durbin K.J."/>
            <person name="Evangelista C.C."/>
            <person name="Ferraz C."/>
            <person name="Ferriera S."/>
            <person name="Fleischmann W."/>
            <person name="Fosler C."/>
            <person name="Gabrielian A.E."/>
            <person name="Garg N.S."/>
            <person name="Gelbart W.M."/>
            <person name="Glasser K."/>
            <person name="Glodek A."/>
            <person name="Gong F."/>
            <person name="Gorrell J.H."/>
            <person name="Gu Z."/>
            <person name="Guan P."/>
            <person name="Harris M."/>
            <person name="Harris N.L."/>
            <person name="Harvey D.A."/>
            <person name="Heiman T.J."/>
            <person name="Hernandez J.R."/>
            <person name="Houck J."/>
            <person name="Hostin D."/>
            <person name="Houston K.A."/>
            <person name="Howland T.J."/>
            <person name="Wei M.-H."/>
            <person name="Ibegwam C."/>
            <person name="Jalali M."/>
            <person name="Kalush F."/>
            <person name="Karpen G.H."/>
            <person name="Ke Z."/>
            <person name="Kennison J.A."/>
            <person name="Ketchum K.A."/>
            <person name="Kimmel B.E."/>
            <person name="Kodira C.D."/>
            <person name="Kraft C.L."/>
            <person name="Kravitz S."/>
            <person name="Kulp D."/>
            <person name="Lai Z."/>
            <person name="Lasko P."/>
            <person name="Lei Y."/>
            <person name="Levitsky A.A."/>
            <person name="Li J.H."/>
            <person name="Li Z."/>
            <person name="Liang Y."/>
            <person name="Lin X."/>
            <person name="Liu X."/>
            <person name="Mattei B."/>
            <person name="McIntosh T.C."/>
            <person name="McLeod M.P."/>
            <person name="McPherson D."/>
            <person name="Merkulov G."/>
            <person name="Milshina N.V."/>
            <person name="Mobarry C."/>
            <person name="Morris J."/>
            <person name="Moshrefi A."/>
            <person name="Mount S.M."/>
            <person name="Moy M."/>
            <person name="Murphy B."/>
            <person name="Murphy L."/>
            <person name="Muzny D.M."/>
            <person name="Nelson D.L."/>
            <person name="Nelson D.R."/>
            <person name="Nelson K.A."/>
            <person name="Nixon K."/>
            <person name="Nusskern D.R."/>
            <person name="Pacleb J.M."/>
            <person name="Palazzolo M."/>
            <person name="Pittman G.S."/>
            <person name="Pan S."/>
            <person name="Pollard J."/>
            <person name="Puri V."/>
            <person name="Reese M.G."/>
            <person name="Reinert K."/>
            <person name="Remington K."/>
            <person name="Saunders R.D.C."/>
            <person name="Scheeler F."/>
            <person name="Shen H."/>
            <person name="Shue B.C."/>
            <person name="Siden-Kiamos I."/>
            <person name="Simpson M."/>
            <person name="Skupski M.P."/>
            <person name="Smith T.J."/>
            <person name="Spier E."/>
            <person name="Spradling A.C."/>
            <person name="Stapleton M."/>
            <person name="Strong R."/>
            <person name="Sun E."/>
            <person name="Svirskas R."/>
            <person name="Tector C."/>
            <person name="Turner R."/>
            <person name="Venter E."/>
            <person name="Wang A.H."/>
            <person name="Wang X."/>
            <person name="Wang Z.-Y."/>
            <person name="Wassarman D.A."/>
            <person name="Weinstock G.M."/>
            <person name="Weissenbach J."/>
            <person name="Williams S.M."/>
            <person name="Woodage T."/>
            <person name="Worley K.C."/>
            <person name="Wu D."/>
            <person name="Yang S."/>
            <person name="Yao Q.A."/>
            <person name="Ye J."/>
            <person name="Yeh R.-F."/>
            <person name="Zaveri J.S."/>
            <person name="Zhan M."/>
            <person name="Zhang G."/>
            <person name="Zhao Q."/>
            <person name="Zheng L."/>
            <person name="Zheng X.H."/>
            <person name="Zhong F.N."/>
            <person name="Zhong W."/>
            <person name="Zhou X."/>
            <person name="Zhu S.C."/>
            <person name="Zhu X."/>
            <person name="Smith H.O."/>
            <person name="Gibbs R.A."/>
            <person name="Myers E.W."/>
            <person name="Rubin G.M."/>
            <person name="Venter J.C."/>
        </authorList>
    </citation>
    <scope>NUCLEOTIDE SEQUENCE [LARGE SCALE GENOMIC DNA]</scope>
    <source>
        <strain>Berkeley</strain>
    </source>
</reference>
<reference key="3">
    <citation type="journal article" date="2002" name="Genome Biol.">
        <title>Annotation of the Drosophila melanogaster euchromatic genome: a systematic review.</title>
        <authorList>
            <person name="Misra S."/>
            <person name="Crosby M.A."/>
            <person name="Mungall C.J."/>
            <person name="Matthews B.B."/>
            <person name="Campbell K.S."/>
            <person name="Hradecky P."/>
            <person name="Huang Y."/>
            <person name="Kaminker J.S."/>
            <person name="Millburn G.H."/>
            <person name="Prochnik S.E."/>
            <person name="Smith C.D."/>
            <person name="Tupy J.L."/>
            <person name="Whitfield E.J."/>
            <person name="Bayraktaroglu L."/>
            <person name="Berman B.P."/>
            <person name="Bettencourt B.R."/>
            <person name="Celniker S.E."/>
            <person name="de Grey A.D.N.J."/>
            <person name="Drysdale R.A."/>
            <person name="Harris N.L."/>
            <person name="Richter J."/>
            <person name="Russo S."/>
            <person name="Schroeder A.J."/>
            <person name="Shu S.Q."/>
            <person name="Stapleton M."/>
            <person name="Yamada C."/>
            <person name="Ashburner M."/>
            <person name="Gelbart W.M."/>
            <person name="Rubin G.M."/>
            <person name="Lewis S.E."/>
        </authorList>
    </citation>
    <scope>GENOME REANNOTATION</scope>
    <source>
        <strain>Berkeley</strain>
    </source>
</reference>
<reference key="4">
    <citation type="submission" date="2003-01" db="EMBL/GenBank/DDBJ databases">
        <authorList>
            <person name="Stapleton M."/>
            <person name="Brokstein P."/>
            <person name="Hong L."/>
            <person name="Agbayani A."/>
            <person name="Carlson J.W."/>
            <person name="Champe M."/>
            <person name="Chavez C."/>
            <person name="Dorsett V."/>
            <person name="Dresnek D."/>
            <person name="Farfan D."/>
            <person name="Frise E."/>
            <person name="George R.A."/>
            <person name="Gonzalez M."/>
            <person name="Guarin H."/>
            <person name="Kronmiller B."/>
            <person name="Li P.W."/>
            <person name="Liao G."/>
            <person name="Miranda A."/>
            <person name="Mungall C.J."/>
            <person name="Nunoo J."/>
            <person name="Pacleb J.M."/>
            <person name="Paragas V."/>
            <person name="Park S."/>
            <person name="Patel S."/>
            <person name="Phouanenavong S."/>
            <person name="Wan K.H."/>
            <person name="Yu C."/>
            <person name="Lewis S.E."/>
            <person name="Rubin G.M."/>
            <person name="Celniker S.E."/>
        </authorList>
    </citation>
    <scope>NUCLEOTIDE SEQUENCE [LARGE SCALE MRNA]</scope>
    <source>
        <strain>Berkeley</strain>
        <tissue>Embryo</tissue>
    </source>
</reference>
<reference key="5">
    <citation type="journal article" date="1993" name="Development">
        <title>Identification and characterization of a gene activated by the deformed homeoprotein.</title>
        <authorList>
            <person name="Mahaffey J.W."/>
            <person name="Jones D.F."/>
            <person name="Hickel J.A."/>
            <person name="Griswold C.M."/>
        </authorList>
    </citation>
    <scope>FUNCTION</scope>
    <scope>TISSUE SPECIFICITY</scope>
    <scope>DEVELOPMENTAL STAGE</scope>
</reference>
<reference key="6">
    <citation type="journal article" date="2022" name="Sci. Rep.">
        <title>Conservation of the unusual dimeric JmjC fold of JMJD7 from Drosophila melanogaster to humans.</title>
        <authorList>
            <person name="Chowdhury R."/>
            <person name="Abboud M.I."/>
            <person name="Wiley J."/>
            <person name="Tumber A."/>
            <person name="Markolovic S."/>
            <person name="Schofield C.J."/>
        </authorList>
    </citation>
    <scope>HYDROXYLATION AT LYS-22</scope>
</reference>
<evidence type="ECO:0000250" key="1">
    <source>
        <dbReference type="UniProtKB" id="P55039"/>
    </source>
</evidence>
<evidence type="ECO:0000250" key="2">
    <source>
        <dbReference type="UniProtKB" id="Q9Y295"/>
    </source>
</evidence>
<evidence type="ECO:0000255" key="3">
    <source>
        <dbReference type="PROSITE-ProRule" id="PRU01047"/>
    </source>
</evidence>
<evidence type="ECO:0000255" key="4">
    <source>
        <dbReference type="PROSITE-ProRule" id="PRU01228"/>
    </source>
</evidence>
<evidence type="ECO:0000269" key="5">
    <source>
    </source>
</evidence>
<evidence type="ECO:0000269" key="6">
    <source>
    </source>
</evidence>
<evidence type="ECO:0000303" key="7">
    <source>
    </source>
</evidence>
<evidence type="ECO:0000305" key="8"/>
<evidence type="ECO:0000312" key="9">
    <source>
        <dbReference type="FlyBase" id="FBgn0010339"/>
    </source>
</evidence>
<evidence type="ECO:0000312" key="10">
    <source>
        <dbReference type="Proteomes" id="UP000000803"/>
    </source>
</evidence>
<proteinExistence type="evidence at protein level"/>
<protein>
    <recommendedName>
        <fullName evidence="7">Guanylate binding protein 128up</fullName>
        <shortName evidence="8">GTP-binding protein</shortName>
    </recommendedName>
    <alternativeName>
        <fullName evidence="9">Protein upstream of RpIII128</fullName>
    </alternativeName>
</protein>
<dbReference type="EMBL" id="X71866">
    <property type="protein sequence ID" value="CAA50701.1"/>
    <property type="molecule type" value="Genomic_DNA"/>
</dbReference>
<dbReference type="EMBL" id="AE013599">
    <property type="protein sequence ID" value="AAF58591.1"/>
    <property type="molecule type" value="Genomic_DNA"/>
</dbReference>
<dbReference type="EMBL" id="AY069810">
    <property type="protein sequence ID" value="AAL39955.1"/>
    <property type="molecule type" value="mRNA"/>
</dbReference>
<dbReference type="PIR" id="S42582">
    <property type="entry name" value="S42582"/>
</dbReference>
<dbReference type="RefSeq" id="NP_536733.1">
    <property type="nucleotide sequence ID" value="NM_080485.6"/>
</dbReference>
<dbReference type="SMR" id="P32234"/>
<dbReference type="BioGRID" id="62072">
    <property type="interactions" value="6"/>
</dbReference>
<dbReference type="FunCoup" id="P32234">
    <property type="interactions" value="2708"/>
</dbReference>
<dbReference type="IntAct" id="P32234">
    <property type="interactions" value="13"/>
</dbReference>
<dbReference type="STRING" id="7227.FBpp0087084"/>
<dbReference type="PaxDb" id="7227-FBpp0087084"/>
<dbReference type="DNASU" id="36288"/>
<dbReference type="EnsemblMetazoa" id="FBtr0087976">
    <property type="protein sequence ID" value="FBpp0087084"/>
    <property type="gene ID" value="FBgn0010339"/>
</dbReference>
<dbReference type="GeneID" id="36288"/>
<dbReference type="KEGG" id="dme:Dmel_CG8340"/>
<dbReference type="AGR" id="FB:FBgn0010339"/>
<dbReference type="CTD" id="36288"/>
<dbReference type="FlyBase" id="FBgn0010339">
    <property type="gene designation" value="128up"/>
</dbReference>
<dbReference type="VEuPathDB" id="VectorBase:FBgn0010339"/>
<dbReference type="eggNOG" id="KOG1487">
    <property type="taxonomic scope" value="Eukaryota"/>
</dbReference>
<dbReference type="GeneTree" id="ENSGT00940000153340"/>
<dbReference type="HOGENOM" id="CLU_044997_0_0_1"/>
<dbReference type="InParanoid" id="P32234"/>
<dbReference type="OMA" id="SAKHPGQ"/>
<dbReference type="OrthoDB" id="603at2759"/>
<dbReference type="PhylomeDB" id="P32234"/>
<dbReference type="Reactome" id="R-DME-9629569">
    <property type="pathway name" value="Protein hydroxylation"/>
</dbReference>
<dbReference type="BioGRID-ORCS" id="36288">
    <property type="hits" value="0 hits in 1 CRISPR screen"/>
</dbReference>
<dbReference type="GenomeRNAi" id="36288"/>
<dbReference type="PRO" id="PR:P32234"/>
<dbReference type="Proteomes" id="UP000000803">
    <property type="component" value="Chromosome 2R"/>
</dbReference>
<dbReference type="Bgee" id="FBgn0010339">
    <property type="expression patterns" value="Expressed in egg chamber and 112 other cell types or tissues"/>
</dbReference>
<dbReference type="GO" id="GO:0005737">
    <property type="term" value="C:cytoplasm"/>
    <property type="evidence" value="ECO:0000318"/>
    <property type="project" value="GO_Central"/>
</dbReference>
<dbReference type="GO" id="GO:0005525">
    <property type="term" value="F:GTP binding"/>
    <property type="evidence" value="ECO:0000314"/>
    <property type="project" value="FlyBase"/>
</dbReference>
<dbReference type="GO" id="GO:0003924">
    <property type="term" value="F:GTPase activity"/>
    <property type="evidence" value="ECO:0007669"/>
    <property type="project" value="InterPro"/>
</dbReference>
<dbReference type="GO" id="GO:0002181">
    <property type="term" value="P:cytoplasmic translation"/>
    <property type="evidence" value="ECO:0000318"/>
    <property type="project" value="GO_Central"/>
</dbReference>
<dbReference type="CDD" id="cd01896">
    <property type="entry name" value="DRG"/>
    <property type="match status" value="1"/>
</dbReference>
<dbReference type="CDD" id="cd17230">
    <property type="entry name" value="TGS_DRG1"/>
    <property type="match status" value="1"/>
</dbReference>
<dbReference type="FunFam" id="3.10.20.30:FF:000003">
    <property type="entry name" value="Developmentally-regulated GTP-binding protein 1"/>
    <property type="match status" value="1"/>
</dbReference>
<dbReference type="FunFam" id="3.40.50.300:FF:000740">
    <property type="entry name" value="Putative GTP-binding protein 1"/>
    <property type="match status" value="1"/>
</dbReference>
<dbReference type="Gene3D" id="3.10.20.30">
    <property type="match status" value="1"/>
</dbReference>
<dbReference type="Gene3D" id="6.10.140.1070">
    <property type="match status" value="2"/>
</dbReference>
<dbReference type="InterPro" id="IPR012675">
    <property type="entry name" value="Beta-grasp_dom_sf"/>
</dbReference>
<dbReference type="InterPro" id="IPR045001">
    <property type="entry name" value="DRG"/>
</dbReference>
<dbReference type="InterPro" id="IPR031167">
    <property type="entry name" value="G_OBG"/>
</dbReference>
<dbReference type="InterPro" id="IPR006073">
    <property type="entry name" value="GTP-bd"/>
</dbReference>
<dbReference type="InterPro" id="IPR031662">
    <property type="entry name" value="GTP-binding_2"/>
</dbReference>
<dbReference type="InterPro" id="IPR006074">
    <property type="entry name" value="GTP1-OBG_CS"/>
</dbReference>
<dbReference type="InterPro" id="IPR027417">
    <property type="entry name" value="P-loop_NTPase"/>
</dbReference>
<dbReference type="InterPro" id="IPR005225">
    <property type="entry name" value="Small_GTP-bd"/>
</dbReference>
<dbReference type="InterPro" id="IPR004095">
    <property type="entry name" value="TGS"/>
</dbReference>
<dbReference type="InterPro" id="IPR012676">
    <property type="entry name" value="TGS-like"/>
</dbReference>
<dbReference type="NCBIfam" id="TIGR00231">
    <property type="entry name" value="small_GTP"/>
    <property type="match status" value="1"/>
</dbReference>
<dbReference type="PANTHER" id="PTHR43127">
    <property type="entry name" value="DEVELOPMENTALLY-REGULATED GTP-BINDING PROTEIN 2"/>
    <property type="match status" value="1"/>
</dbReference>
<dbReference type="Pfam" id="PF01926">
    <property type="entry name" value="MMR_HSR1"/>
    <property type="match status" value="1"/>
</dbReference>
<dbReference type="Pfam" id="PF16897">
    <property type="entry name" value="MMR_HSR1_Xtn"/>
    <property type="match status" value="1"/>
</dbReference>
<dbReference type="Pfam" id="PF02824">
    <property type="entry name" value="TGS"/>
    <property type="match status" value="1"/>
</dbReference>
<dbReference type="PRINTS" id="PR00326">
    <property type="entry name" value="GTP1OBG"/>
</dbReference>
<dbReference type="SUPFAM" id="SSF52540">
    <property type="entry name" value="P-loop containing nucleoside triphosphate hydrolases"/>
    <property type="match status" value="1"/>
</dbReference>
<dbReference type="SUPFAM" id="SSF81271">
    <property type="entry name" value="TGS-like"/>
    <property type="match status" value="1"/>
</dbReference>
<dbReference type="PROSITE" id="PS51710">
    <property type="entry name" value="G_OBG"/>
    <property type="match status" value="1"/>
</dbReference>
<dbReference type="PROSITE" id="PS00905">
    <property type="entry name" value="GTP1_OBG"/>
    <property type="match status" value="1"/>
</dbReference>
<dbReference type="PROSITE" id="PS51880">
    <property type="entry name" value="TGS"/>
    <property type="match status" value="1"/>
</dbReference>
<sequence length="368" mass="41132">MSTILEKISAIESEMARTQKNKATSAHLGLLKAKLAKLRRELISPKGGGGGTGEAGFEVAKTGDARVGFVGFPSVGKSTLLSNLAGVYSEVAAYEFTTLTTVPGCIKYKGAKIQLLDLPGIIEGAKDGKGRGRQVIAVARTCNLIFMVLDCLKPLGHKKLLEHELEGFGIRLNKKPPNIYYKRKDKGGINLNSMVPQSELDTDLVKTILSEYKIHNADITLRYDATSDDLIDVIEGNRIYIPCIYLLNKIDQISIEELDVIYKIPHCVPISAHHHWNFDDLLELMWEYLRLQRIYTKPKGQLPDYNSPVVLHNERTSIEDFCNKLHRSIAKEFKYALVWGSSVKHQPQKVGIEHVLNDEDVVQIVKKV</sequence>
<gene>
    <name evidence="9" type="primary">128up</name>
    <name evidence="7 9" type="synonym">GBP</name>
    <name evidence="9" type="synonym">GTP-bp</name>
    <name evidence="9" type="ORF">CG8340</name>
</gene>
<comment type="function">
    <text evidence="1 2 6">Catalyzes the conversion of GTP to GDP through hydrolysis of the gamma-phosphate bond in GTP (By similarity). Dfd/deformed is required to activate 128up in maxillary segment cells.</text>
</comment>
<comment type="tissue specificity">
    <text evidence="6">Expressed in posterior-lateral epidermis of the maxillary lobe.</text>
</comment>
<comment type="developmental stage">
    <text evidence="6">Expressed in embryos and adults.</text>
</comment>
<comment type="PTM">
    <text evidence="5">Hydroxylated (with S stereochemistry) at C-3 of Lys-22 by JMJD7.</text>
</comment>
<comment type="similarity">
    <text evidence="3">Belongs to the TRAFAC class OBG-HflX-like GTPase superfamily. OBG GTPase family.</text>
</comment>
<keyword id="KW-0342">GTP-binding</keyword>
<keyword id="KW-0379">Hydroxylation</keyword>
<keyword id="KW-0547">Nucleotide-binding</keyword>
<keyword id="KW-1185">Reference proteome</keyword>
<accession>P32234</accession>
<accession>Q9V648</accession>